<keyword id="KW-0002">3D-structure</keyword>
<keyword id="KW-0025">Alternative splicing</keyword>
<keyword id="KW-0968">Cytoplasmic vesicle</keyword>
<keyword id="KW-1015">Disulfide bond</keyword>
<keyword id="KW-0472">Membrane</keyword>
<keyword id="KW-1185">Reference proteome</keyword>
<keyword id="KW-0964">Secreted</keyword>
<keyword id="KW-0735">Signal-anchor</keyword>
<keyword id="KW-0812">Transmembrane</keyword>
<keyword id="KW-1133">Transmembrane helix</keyword>
<evidence type="ECO:0000250" key="1"/>
<evidence type="ECO:0000255" key="2"/>
<evidence type="ECO:0000255" key="3">
    <source>
        <dbReference type="PROSITE-ProRule" id="PRU00680"/>
    </source>
</evidence>
<evidence type="ECO:0000269" key="4">
    <source>
    </source>
</evidence>
<evidence type="ECO:0000269" key="5">
    <source>
    </source>
</evidence>
<evidence type="ECO:0000269" key="6">
    <source>
    </source>
</evidence>
<evidence type="ECO:0000269" key="7">
    <source ref="8"/>
</evidence>
<evidence type="ECO:0000303" key="8">
    <source>
    </source>
</evidence>
<evidence type="ECO:0000305" key="9"/>
<evidence type="ECO:0000305" key="10">
    <source>
    </source>
</evidence>
<evidence type="ECO:0007829" key="11">
    <source>
        <dbReference type="PDB" id="4YF2"/>
    </source>
</evidence>
<feature type="chain" id="PRO_0000256221" description="Sperm acrosome membrane-associated protein 3, membrane form">
    <location>
        <begin position="1"/>
        <end position="221"/>
    </location>
</feature>
<feature type="chain" id="PRO_0000256222" description="Sperm acrosome membrane-associated protein 3, processed form">
    <location>
        <begin position="95"/>
        <end position="221"/>
    </location>
</feature>
<feature type="topological domain" description="Cytoplasmic" evidence="2">
    <location>
        <begin position="1"/>
        <end position="69"/>
    </location>
</feature>
<feature type="transmembrane region" description="Helical; Signal-anchor for type II membrane protein" evidence="2">
    <location>
        <begin position="70"/>
        <end position="90"/>
    </location>
</feature>
<feature type="topological domain" description="Extracellular" evidence="2">
    <location>
        <begin position="91"/>
        <end position="221"/>
    </location>
</feature>
<feature type="domain" description="C-type lysozyme" evidence="3">
    <location>
        <begin position="94"/>
        <end position="221"/>
    </location>
</feature>
<feature type="site" description="Cleavage; to produce processed form" evidence="1">
    <location>
        <begin position="93"/>
        <end position="94"/>
    </location>
</feature>
<feature type="disulfide bond" evidence="3 7">
    <location>
        <begin position="99"/>
        <end position="219"/>
    </location>
</feature>
<feature type="disulfide bond" evidence="3 7">
    <location>
        <begin position="123"/>
        <end position="207"/>
    </location>
</feature>
<feature type="disulfide bond" evidence="3 7">
    <location>
        <begin position="157"/>
        <end position="172"/>
    </location>
</feature>
<feature type="disulfide bond" evidence="3 7">
    <location>
        <begin position="168"/>
        <end position="186"/>
    </location>
</feature>
<feature type="splice variant" id="VSP_021330" description="In isoform 2." evidence="8">
    <location>
        <begin position="1"/>
        <end position="58"/>
    </location>
</feature>
<feature type="sequence conflict" description="In Ref. 2; BAB24544." evidence="9" ref="2">
    <original>A</original>
    <variation>P</variation>
    <location>
        <position position="61"/>
    </location>
</feature>
<feature type="sequence conflict" description="In Ref. 2; BAB24544." evidence="9" ref="2">
    <original>PR</original>
    <variation>SI</variation>
    <location>
        <begin position="66"/>
        <end position="67"/>
    </location>
</feature>
<feature type="sequence conflict" description="In Ref. 1; AAS77887." evidence="9" ref="1">
    <original>L</original>
    <variation>P</variation>
    <location>
        <position position="212"/>
    </location>
</feature>
<feature type="helix" evidence="11">
    <location>
        <begin position="98"/>
        <end position="107"/>
    </location>
</feature>
<feature type="helix" evidence="11">
    <location>
        <begin position="113"/>
        <end position="115"/>
    </location>
</feature>
<feature type="helix" evidence="11">
    <location>
        <begin position="118"/>
        <end position="129"/>
    </location>
</feature>
<feature type="strand" evidence="11">
    <location>
        <begin position="136"/>
        <end position="138"/>
    </location>
</feature>
<feature type="strand" evidence="11">
    <location>
        <begin position="144"/>
        <end position="146"/>
    </location>
</feature>
<feature type="turn" evidence="11">
    <location>
        <begin position="147"/>
        <end position="150"/>
    </location>
</feature>
<feature type="turn" evidence="11">
    <location>
        <begin position="153"/>
        <end position="155"/>
    </location>
</feature>
<feature type="strand" evidence="11">
    <location>
        <begin position="156"/>
        <end position="158"/>
    </location>
</feature>
<feature type="strand" evidence="11">
    <location>
        <begin position="160"/>
        <end position="162"/>
    </location>
</feature>
<feature type="helix" evidence="11">
    <location>
        <begin position="172"/>
        <end position="176"/>
    </location>
</feature>
<feature type="helix" evidence="11">
    <location>
        <begin position="181"/>
        <end position="191"/>
    </location>
</feature>
<feature type="helix" evidence="11">
    <location>
        <begin position="196"/>
        <end position="199"/>
    </location>
</feature>
<feature type="helix" evidence="11">
    <location>
        <begin position="201"/>
        <end position="206"/>
    </location>
</feature>
<feature type="turn" evidence="11">
    <location>
        <begin position="207"/>
        <end position="209"/>
    </location>
</feature>
<feature type="helix" evidence="11">
    <location>
        <begin position="213"/>
        <end position="215"/>
    </location>
</feature>
<feature type="turn" evidence="11">
    <location>
        <begin position="216"/>
        <end position="218"/>
    </location>
</feature>
<reference key="1">
    <citation type="journal article" date="2005" name="Biol. Reprod.">
        <title>Molecular cloning and characterization of three novel lysozyme-like genes, predominantly expressed in the male reproductive system of humans, belonging to the c-type lysozyme/alpha-lactalbumin family.</title>
        <authorList>
            <person name="Zhang K."/>
            <person name="Gao R."/>
            <person name="Zhang H."/>
            <person name="Cai X."/>
            <person name="Shen C."/>
            <person name="Wu C."/>
            <person name="Zhao S."/>
            <person name="Yu L."/>
        </authorList>
    </citation>
    <scope>NUCLEOTIDE SEQUENCE [GENOMIC DNA] (ISOFORM 2)</scope>
    <scope>TISSUE SPECIFICITY</scope>
    <source>
        <tissue>Testis</tissue>
    </source>
</reference>
<reference key="2">
    <citation type="journal article" date="2005" name="Science">
        <title>The transcriptional landscape of the mammalian genome.</title>
        <authorList>
            <person name="Carninci P."/>
            <person name="Kasukawa T."/>
            <person name="Katayama S."/>
            <person name="Gough J."/>
            <person name="Frith M.C."/>
            <person name="Maeda N."/>
            <person name="Oyama R."/>
            <person name="Ravasi T."/>
            <person name="Lenhard B."/>
            <person name="Wells C."/>
            <person name="Kodzius R."/>
            <person name="Shimokawa K."/>
            <person name="Bajic V.B."/>
            <person name="Brenner S.E."/>
            <person name="Batalov S."/>
            <person name="Forrest A.R."/>
            <person name="Zavolan M."/>
            <person name="Davis M.J."/>
            <person name="Wilming L.G."/>
            <person name="Aidinis V."/>
            <person name="Allen J.E."/>
            <person name="Ambesi-Impiombato A."/>
            <person name="Apweiler R."/>
            <person name="Aturaliya R.N."/>
            <person name="Bailey T.L."/>
            <person name="Bansal M."/>
            <person name="Baxter L."/>
            <person name="Beisel K.W."/>
            <person name="Bersano T."/>
            <person name="Bono H."/>
            <person name="Chalk A.M."/>
            <person name="Chiu K.P."/>
            <person name="Choudhary V."/>
            <person name="Christoffels A."/>
            <person name="Clutterbuck D.R."/>
            <person name="Crowe M.L."/>
            <person name="Dalla E."/>
            <person name="Dalrymple B.P."/>
            <person name="de Bono B."/>
            <person name="Della Gatta G."/>
            <person name="di Bernardo D."/>
            <person name="Down T."/>
            <person name="Engstrom P."/>
            <person name="Fagiolini M."/>
            <person name="Faulkner G."/>
            <person name="Fletcher C.F."/>
            <person name="Fukushima T."/>
            <person name="Furuno M."/>
            <person name="Futaki S."/>
            <person name="Gariboldi M."/>
            <person name="Georgii-Hemming P."/>
            <person name="Gingeras T.R."/>
            <person name="Gojobori T."/>
            <person name="Green R.E."/>
            <person name="Gustincich S."/>
            <person name="Harbers M."/>
            <person name="Hayashi Y."/>
            <person name="Hensch T.K."/>
            <person name="Hirokawa N."/>
            <person name="Hill D."/>
            <person name="Huminiecki L."/>
            <person name="Iacono M."/>
            <person name="Ikeo K."/>
            <person name="Iwama A."/>
            <person name="Ishikawa T."/>
            <person name="Jakt M."/>
            <person name="Kanapin A."/>
            <person name="Katoh M."/>
            <person name="Kawasawa Y."/>
            <person name="Kelso J."/>
            <person name="Kitamura H."/>
            <person name="Kitano H."/>
            <person name="Kollias G."/>
            <person name="Krishnan S.P."/>
            <person name="Kruger A."/>
            <person name="Kummerfeld S.K."/>
            <person name="Kurochkin I.V."/>
            <person name="Lareau L.F."/>
            <person name="Lazarevic D."/>
            <person name="Lipovich L."/>
            <person name="Liu J."/>
            <person name="Liuni S."/>
            <person name="McWilliam S."/>
            <person name="Madan Babu M."/>
            <person name="Madera M."/>
            <person name="Marchionni L."/>
            <person name="Matsuda H."/>
            <person name="Matsuzawa S."/>
            <person name="Miki H."/>
            <person name="Mignone F."/>
            <person name="Miyake S."/>
            <person name="Morris K."/>
            <person name="Mottagui-Tabar S."/>
            <person name="Mulder N."/>
            <person name="Nakano N."/>
            <person name="Nakauchi H."/>
            <person name="Ng P."/>
            <person name="Nilsson R."/>
            <person name="Nishiguchi S."/>
            <person name="Nishikawa S."/>
            <person name="Nori F."/>
            <person name="Ohara O."/>
            <person name="Okazaki Y."/>
            <person name="Orlando V."/>
            <person name="Pang K.C."/>
            <person name="Pavan W.J."/>
            <person name="Pavesi G."/>
            <person name="Pesole G."/>
            <person name="Petrovsky N."/>
            <person name="Piazza S."/>
            <person name="Reed J."/>
            <person name="Reid J.F."/>
            <person name="Ring B.Z."/>
            <person name="Ringwald M."/>
            <person name="Rost B."/>
            <person name="Ruan Y."/>
            <person name="Salzberg S.L."/>
            <person name="Sandelin A."/>
            <person name="Schneider C."/>
            <person name="Schoenbach C."/>
            <person name="Sekiguchi K."/>
            <person name="Semple C.A."/>
            <person name="Seno S."/>
            <person name="Sessa L."/>
            <person name="Sheng Y."/>
            <person name="Shibata Y."/>
            <person name="Shimada H."/>
            <person name="Shimada K."/>
            <person name="Silva D."/>
            <person name="Sinclair B."/>
            <person name="Sperling S."/>
            <person name="Stupka E."/>
            <person name="Sugiura K."/>
            <person name="Sultana R."/>
            <person name="Takenaka Y."/>
            <person name="Taki K."/>
            <person name="Tammoja K."/>
            <person name="Tan S.L."/>
            <person name="Tang S."/>
            <person name="Taylor M.S."/>
            <person name="Tegner J."/>
            <person name="Teichmann S.A."/>
            <person name="Ueda H.R."/>
            <person name="van Nimwegen E."/>
            <person name="Verardo R."/>
            <person name="Wei C.L."/>
            <person name="Yagi K."/>
            <person name="Yamanishi H."/>
            <person name="Zabarovsky E."/>
            <person name="Zhu S."/>
            <person name="Zimmer A."/>
            <person name="Hide W."/>
            <person name="Bult C."/>
            <person name="Grimmond S.M."/>
            <person name="Teasdale R.D."/>
            <person name="Liu E.T."/>
            <person name="Brusic V."/>
            <person name="Quackenbush J."/>
            <person name="Wahlestedt C."/>
            <person name="Mattick J.S."/>
            <person name="Hume D.A."/>
            <person name="Kai C."/>
            <person name="Sasaki D."/>
            <person name="Tomaru Y."/>
            <person name="Fukuda S."/>
            <person name="Kanamori-Katayama M."/>
            <person name="Suzuki M."/>
            <person name="Aoki J."/>
            <person name="Arakawa T."/>
            <person name="Iida J."/>
            <person name="Imamura K."/>
            <person name="Itoh M."/>
            <person name="Kato T."/>
            <person name="Kawaji H."/>
            <person name="Kawagashira N."/>
            <person name="Kawashima T."/>
            <person name="Kojima M."/>
            <person name="Kondo S."/>
            <person name="Konno H."/>
            <person name="Nakano K."/>
            <person name="Ninomiya N."/>
            <person name="Nishio T."/>
            <person name="Okada M."/>
            <person name="Plessy C."/>
            <person name="Shibata K."/>
            <person name="Shiraki T."/>
            <person name="Suzuki S."/>
            <person name="Tagami M."/>
            <person name="Waki K."/>
            <person name="Watahiki A."/>
            <person name="Okamura-Oho Y."/>
            <person name="Suzuki H."/>
            <person name="Kawai J."/>
            <person name="Hayashizaki Y."/>
        </authorList>
    </citation>
    <scope>NUCLEOTIDE SEQUENCE [LARGE SCALE MRNA] (ISOFORM 1)</scope>
    <source>
        <strain>C57BL/6J</strain>
        <tissue>Testis</tissue>
    </source>
</reference>
<reference key="3">
    <citation type="journal article" date="2009" name="PLoS Biol.">
        <title>Lineage-specific biology revealed by a finished genome assembly of the mouse.</title>
        <authorList>
            <person name="Church D.M."/>
            <person name="Goodstadt L."/>
            <person name="Hillier L.W."/>
            <person name="Zody M.C."/>
            <person name="Goldstein S."/>
            <person name="She X."/>
            <person name="Bult C.J."/>
            <person name="Agarwala R."/>
            <person name="Cherry J.L."/>
            <person name="DiCuccio M."/>
            <person name="Hlavina W."/>
            <person name="Kapustin Y."/>
            <person name="Meric P."/>
            <person name="Maglott D."/>
            <person name="Birtle Z."/>
            <person name="Marques A.C."/>
            <person name="Graves T."/>
            <person name="Zhou S."/>
            <person name="Teague B."/>
            <person name="Potamousis K."/>
            <person name="Churas C."/>
            <person name="Place M."/>
            <person name="Herschleb J."/>
            <person name="Runnheim R."/>
            <person name="Forrest D."/>
            <person name="Amos-Landgraf J."/>
            <person name="Schwartz D.C."/>
            <person name="Cheng Z."/>
            <person name="Lindblad-Toh K."/>
            <person name="Eichler E.E."/>
            <person name="Ponting C.P."/>
        </authorList>
    </citation>
    <scope>NUCLEOTIDE SEQUENCE [LARGE SCALE GENOMIC DNA]</scope>
    <source>
        <strain>C57BL/6J</strain>
    </source>
</reference>
<reference key="4">
    <citation type="journal article" date="2004" name="Genome Res.">
        <title>The status, quality, and expansion of the NIH full-length cDNA project: the Mammalian Gene Collection (MGC).</title>
        <authorList>
            <consortium name="The MGC Project Team"/>
        </authorList>
    </citation>
    <scope>NUCLEOTIDE SEQUENCE [LARGE SCALE MRNA] (ISOFORM 2)</scope>
    <source>
        <tissue>Testis</tissue>
    </source>
</reference>
<reference key="5">
    <citation type="journal article" date="2005" name="Dev. Biol.">
        <title>Mouse SLLP1, a sperm lysozyme-like protein involved in sperm-egg binding and fertilization.</title>
        <authorList>
            <person name="Herrero M.B."/>
            <person name="Mandal A."/>
            <person name="Digilio L.C."/>
            <person name="Coonrod S.A."/>
            <person name="Maier B."/>
            <person name="Herr J.C."/>
        </authorList>
    </citation>
    <scope>NUCLEOTIDE SEQUENCE [MRNA] OF 94-221 (ISOFORMS 1/2)</scope>
    <scope>FUNCTION IN FERTILIZATION</scope>
    <scope>SUBCELLULAR LOCATION</scope>
    <scope>TISSUE SPECIFICITY</scope>
    <source>
        <strain>BALB/cJ</strain>
        <tissue>Testis</tissue>
    </source>
</reference>
<reference key="6">
    <citation type="journal article" date="2010" name="Cell">
        <title>A tissue-specific atlas of mouse protein phosphorylation and expression.</title>
        <authorList>
            <person name="Huttlin E.L."/>
            <person name="Jedrychowski M.P."/>
            <person name="Elias J.E."/>
            <person name="Goswami T."/>
            <person name="Rad R."/>
            <person name="Beausoleil S.A."/>
            <person name="Villen J."/>
            <person name="Haas W."/>
            <person name="Sowa M.E."/>
            <person name="Gygi S.P."/>
        </authorList>
    </citation>
    <scope>IDENTIFICATION BY MASS SPECTROMETRY [LARGE SCALE ANALYSIS]</scope>
    <source>
        <tissue>Testis</tissue>
    </source>
</reference>
<reference key="7">
    <citation type="journal article" date="2012" name="Dev. Biol.">
        <title>Oocyte specific oolemmal SAS1B involved in sperm binding through intra-acrosomal SLLP1 during fertilization.</title>
        <authorList>
            <person name="Sachdev M."/>
            <person name="Mandal A."/>
            <person name="Mulders S."/>
            <person name="Digilio L.C."/>
            <person name="Panneerdoss S."/>
            <person name="Suryavathi V."/>
            <person name="Pires E."/>
            <person name="Klotz K.L."/>
            <person name="Hermens L."/>
            <person name="Herrero M.B."/>
            <person name="Flickinger C.J."/>
            <person name="van Duin M."/>
            <person name="Herr J.C."/>
        </authorList>
    </citation>
    <scope>INTERACTION WITH ASTL</scope>
</reference>
<reference key="8">
    <citation type="submission" date="2006-04" db="PDB data bank">
        <authorList>
            <person name="Zheng H."/>
            <person name="Mandal A."/>
            <person name="Shumilin I.A."/>
            <person name="Chruszcz M."/>
            <person name="Herr J.C."/>
            <person name="Minor W."/>
        </authorList>
    </citation>
    <scope>X-RAY CRYSTALLOGRAPHY (2.3 ANGSTROMS) OF 93-221</scope>
    <scope>DISULFIDE BONDS</scope>
</reference>
<accession>Q9D9X8</accession>
<accession>Q5SUU3</accession>
<accession>Q6PKP1</accession>
<accession>Q6PX67</accession>
<dbReference type="EMBL" id="AY572448">
    <property type="protein sequence ID" value="AAS77887.1"/>
    <property type="molecule type" value="mRNA"/>
</dbReference>
<dbReference type="EMBL" id="AK006357">
    <property type="protein sequence ID" value="BAB24544.1"/>
    <property type="molecule type" value="mRNA"/>
</dbReference>
<dbReference type="EMBL" id="AL645842">
    <property type="status" value="NOT_ANNOTATED_CDS"/>
    <property type="molecule type" value="Genomic_DNA"/>
</dbReference>
<dbReference type="EMBL" id="BC100503">
    <property type="protein sequence ID" value="AAI00504.1"/>
    <property type="molecule type" value="mRNA"/>
</dbReference>
<dbReference type="EMBL" id="AY601763">
    <property type="protein sequence ID" value="AAT07446.1"/>
    <property type="molecule type" value="mRNA"/>
</dbReference>
<dbReference type="CCDS" id="CCDS25136.1">
    <molecule id="Q9D9X8-2"/>
</dbReference>
<dbReference type="RefSeq" id="NP_001346112.1">
    <molecule id="Q9D9X8-2"/>
    <property type="nucleotide sequence ID" value="NM_001359183.1"/>
</dbReference>
<dbReference type="RefSeq" id="NP_083643.1">
    <molecule id="Q9D9X8-2"/>
    <property type="nucleotide sequence ID" value="NM_029367.1"/>
</dbReference>
<dbReference type="RefSeq" id="XP_011247596.1">
    <property type="nucleotide sequence ID" value="XM_011249294.2"/>
</dbReference>
<dbReference type="PDB" id="4YF2">
    <property type="method" value="X-ray"/>
    <property type="resolution" value="2.15 A"/>
    <property type="chains" value="A/B/C=93-221"/>
</dbReference>
<dbReference type="PDBsum" id="4YF2"/>
<dbReference type="SMR" id="Q9D9X8"/>
<dbReference type="FunCoup" id="Q9D9X8">
    <property type="interactions" value="31"/>
</dbReference>
<dbReference type="STRING" id="10090.ENSMUSP00000099512"/>
<dbReference type="CAZy" id="GH22">
    <property type="family name" value="Glycoside Hydrolase Family 22"/>
</dbReference>
<dbReference type="PhosphoSitePlus" id="Q9D9X8"/>
<dbReference type="SwissPalm" id="Q9D9X8"/>
<dbReference type="PaxDb" id="10090-ENSMUSP00000099511"/>
<dbReference type="PeptideAtlas" id="Q9D9X8"/>
<dbReference type="ProteomicsDB" id="260816">
    <molecule id="Q9D9X8-1"/>
</dbReference>
<dbReference type="ProteomicsDB" id="260817">
    <molecule id="Q9D9X8-2"/>
</dbReference>
<dbReference type="Antibodypedia" id="15460">
    <property type="antibodies" value="100 antibodies from 22 providers"/>
</dbReference>
<dbReference type="Ensembl" id="ENSMUST00000103222.4">
    <molecule id="Q9D9X8-2"/>
    <property type="protein sequence ID" value="ENSMUSP00000099511.4"/>
    <property type="gene ID" value="ENSMUSG00000053184.16"/>
</dbReference>
<dbReference type="Ensembl" id="ENSMUST00000103223.8">
    <molecule id="Q9D9X8-2"/>
    <property type="protein sequence ID" value="ENSMUSP00000099512.2"/>
    <property type="gene ID" value="ENSMUSG00000053184.16"/>
</dbReference>
<dbReference type="GeneID" id="75622"/>
<dbReference type="KEGG" id="mmu:75622"/>
<dbReference type="UCSC" id="uc007kmk.1">
    <molecule id="Q9D9X8-1"/>
    <property type="organism name" value="mouse"/>
</dbReference>
<dbReference type="AGR" id="MGI:1922872"/>
<dbReference type="CTD" id="124912"/>
<dbReference type="MGI" id="MGI:1922872">
    <property type="gene designation" value="Spaca3"/>
</dbReference>
<dbReference type="VEuPathDB" id="HostDB:ENSMUSG00000053184"/>
<dbReference type="eggNOG" id="ENOG502S1F5">
    <property type="taxonomic scope" value="Eukaryota"/>
</dbReference>
<dbReference type="GeneTree" id="ENSGT00940000161810"/>
<dbReference type="HOGENOM" id="CLU_111620_0_1_1"/>
<dbReference type="InParanoid" id="Q9D9X8"/>
<dbReference type="OMA" id="MYCTDLL"/>
<dbReference type="OrthoDB" id="17373at2759"/>
<dbReference type="PhylomeDB" id="Q9D9X8"/>
<dbReference type="TreeFam" id="TF324882"/>
<dbReference type="BioGRID-ORCS" id="75622">
    <property type="hits" value="4 hits in 77 CRISPR screens"/>
</dbReference>
<dbReference type="EvolutionaryTrace" id="Q9D9X8"/>
<dbReference type="PRO" id="PR:Q9D9X8"/>
<dbReference type="Proteomes" id="UP000000589">
    <property type="component" value="Chromosome 11"/>
</dbReference>
<dbReference type="RNAct" id="Q9D9X8">
    <property type="molecule type" value="protein"/>
</dbReference>
<dbReference type="Bgee" id="ENSMUSG00000053184">
    <property type="expression patterns" value="Expressed in spermatid and 10 other cell types or tissues"/>
</dbReference>
<dbReference type="ExpressionAtlas" id="Q9D9X8">
    <property type="expression patterns" value="baseline and differential"/>
</dbReference>
<dbReference type="GO" id="GO:0043159">
    <property type="term" value="C:acrosomal matrix"/>
    <property type="evidence" value="ECO:0007669"/>
    <property type="project" value="Ensembl"/>
</dbReference>
<dbReference type="GO" id="GO:0002080">
    <property type="term" value="C:acrosomal membrane"/>
    <property type="evidence" value="ECO:0007669"/>
    <property type="project" value="UniProtKB-SubCell"/>
</dbReference>
<dbReference type="GO" id="GO:0001669">
    <property type="term" value="C:acrosomal vesicle"/>
    <property type="evidence" value="ECO:0000314"/>
    <property type="project" value="MGI"/>
</dbReference>
<dbReference type="GO" id="GO:0005576">
    <property type="term" value="C:extracellular region"/>
    <property type="evidence" value="ECO:0007669"/>
    <property type="project" value="UniProtKB-SubCell"/>
</dbReference>
<dbReference type="GO" id="GO:0030141">
    <property type="term" value="C:secretory granule"/>
    <property type="evidence" value="ECO:0000250"/>
    <property type="project" value="UniProtKB"/>
</dbReference>
<dbReference type="GO" id="GO:0003796">
    <property type="term" value="F:lysozyme activity"/>
    <property type="evidence" value="ECO:0007669"/>
    <property type="project" value="InterPro"/>
</dbReference>
<dbReference type="GO" id="GO:0007342">
    <property type="term" value="P:fusion of sperm to egg plasma membrane involved in single fertilization"/>
    <property type="evidence" value="ECO:0000315"/>
    <property type="project" value="UniProtKB"/>
</dbReference>
<dbReference type="GO" id="GO:0035036">
    <property type="term" value="P:sperm-egg recognition"/>
    <property type="evidence" value="ECO:0000315"/>
    <property type="project" value="MGI"/>
</dbReference>
<dbReference type="CDD" id="cd16897">
    <property type="entry name" value="LYZ_C"/>
    <property type="match status" value="1"/>
</dbReference>
<dbReference type="FunFam" id="1.10.530.10:FF:000001">
    <property type="entry name" value="Lysozyme C"/>
    <property type="match status" value="1"/>
</dbReference>
<dbReference type="Gene3D" id="1.10.530.10">
    <property type="match status" value="1"/>
</dbReference>
<dbReference type="InterPro" id="IPR001916">
    <property type="entry name" value="Glyco_hydro_22"/>
</dbReference>
<dbReference type="InterPro" id="IPR019799">
    <property type="entry name" value="Glyco_hydro_22_CS"/>
</dbReference>
<dbReference type="InterPro" id="IPR000974">
    <property type="entry name" value="Glyco_hydro_22_lys"/>
</dbReference>
<dbReference type="InterPro" id="IPR023346">
    <property type="entry name" value="Lysozyme-like_dom_sf"/>
</dbReference>
<dbReference type="PANTHER" id="PTHR11407">
    <property type="entry name" value="LYSOZYME C"/>
    <property type="match status" value="1"/>
</dbReference>
<dbReference type="PANTHER" id="PTHR11407:SF25">
    <property type="entry name" value="SPERM ACROSOME MEMBRANE-ASSOCIATED PROTEIN 3"/>
    <property type="match status" value="1"/>
</dbReference>
<dbReference type="Pfam" id="PF00062">
    <property type="entry name" value="Lys"/>
    <property type="match status" value="1"/>
</dbReference>
<dbReference type="PRINTS" id="PR00137">
    <property type="entry name" value="LYSOZYME"/>
</dbReference>
<dbReference type="PRINTS" id="PR00135">
    <property type="entry name" value="LYZLACT"/>
</dbReference>
<dbReference type="SMART" id="SM00263">
    <property type="entry name" value="LYZ1"/>
    <property type="match status" value="1"/>
</dbReference>
<dbReference type="SUPFAM" id="SSF53955">
    <property type="entry name" value="Lysozyme-like"/>
    <property type="match status" value="1"/>
</dbReference>
<dbReference type="PROSITE" id="PS00128">
    <property type="entry name" value="GLYCOSYL_HYDROL_F22_1"/>
    <property type="match status" value="1"/>
</dbReference>
<dbReference type="PROSITE" id="PS51348">
    <property type="entry name" value="GLYCOSYL_HYDROL_F22_2"/>
    <property type="match status" value="1"/>
</dbReference>
<sequence length="221" mass="25020">MGICMSMYTQVLVPVDADGDHHILWSRFYERWGSCFNPCAGLVNCLPPHSSALYLCHRMEARSRAPRRQLCPPGITWLALAYLLSCLLASSKAKVFSRCELAKEMHDFGLDGYRGYNLADWVCLAYYTSGFNTNAVDHEADGSTNNGIFQISSRRWCRTLASNGPNLCRIYCTDLLNNDLKDSIVCAMKIVQEPLGLGYWEAWRHHCQGRDLSDWVDGCDF</sequence>
<name>SACA3_MOUSE</name>
<gene>
    <name type="primary">Spaca3</name>
    <name type="synonym">Lyc3</name>
    <name type="synonym">Lyzl3</name>
    <name type="synonym">Sllp1</name>
</gene>
<comment type="function">
    <text evidence="1 4">Sperm surface membrane protein that may be involved in sperm-egg plasma membrane adhesion and fusion during fertilization. It could be a potential receptor for the egg oligosaccharide residue N-acetylglucosamine, which is present in the extracellular matrix over the egg plasma membrane. The processed form has no detectable bacteriolytic activity in vitro (By similarity).</text>
</comment>
<comment type="subunit">
    <text evidence="6">Interacts with ASTL.</text>
</comment>
<comment type="subcellular location">
    <subcellularLocation>
        <location evidence="10">Cytoplasmic vesicle</location>
        <location evidence="10">Secretory vesicle</location>
        <location evidence="10">Acrosome membrane</location>
        <topology evidence="10">Single-pass type II membrane protein</topology>
    </subcellularLocation>
    <text>Anterior acrosome in non-capacitated spermatozoa and retained in the equatorial segment and in the luminal face of both the inner and outer acrosomal membranes following capacitation and the acrosome reaction.</text>
</comment>
<comment type="subcellular location">
    <molecule>Isoform 2</molecule>
    <subcellularLocation>
        <location evidence="9">Secreted</location>
    </subcellularLocation>
</comment>
<comment type="alternative products">
    <event type="alternative splicing"/>
    <isoform>
        <id>Q9D9X8-1</id>
        <name>1</name>
        <sequence type="displayed"/>
    </isoform>
    <isoform>
        <id>Q9D9X8-2</id>
        <name>2</name>
        <sequence type="described" ref="VSP_021330"/>
    </isoform>
</comment>
<comment type="tissue specificity">
    <text evidence="4 5">The processed form is expressed in sperm (at protein level). Expressed strongly in testis and epididymis and weakly in pancreas.</text>
</comment>
<comment type="similarity">
    <text evidence="3">Belongs to the glycosyl hydrolase 22 family.</text>
</comment>
<comment type="caution">
    <text evidence="9">Although it belongs to the glycosyl hydrolase 22 family, Thr-128 and Asn-145 are present instead of the conserved Glu and Asp which are active site residues. It is therefore expected that this protein lacks hydrolase activity.</text>
</comment>
<proteinExistence type="evidence at protein level"/>
<protein>
    <recommendedName>
        <fullName>Sperm acrosome membrane-associated protein 3</fullName>
    </recommendedName>
    <alternativeName>
        <fullName>Lysozyme-like protein 3</fullName>
    </alternativeName>
    <alternativeName>
        <fullName>Sperm lysozyme-like protein 1</fullName>
        <shortName>mSLLP1</shortName>
    </alternativeName>
    <component>
        <recommendedName>
            <fullName>Sperm acrosome membrane-associated protein 3, membrane form</fullName>
        </recommendedName>
    </component>
    <component>
        <recommendedName>
            <fullName>Sperm acrosome membrane-associated protein 3, processed form</fullName>
        </recommendedName>
    </component>
</protein>
<organism>
    <name type="scientific">Mus musculus</name>
    <name type="common">Mouse</name>
    <dbReference type="NCBI Taxonomy" id="10090"/>
    <lineage>
        <taxon>Eukaryota</taxon>
        <taxon>Metazoa</taxon>
        <taxon>Chordata</taxon>
        <taxon>Craniata</taxon>
        <taxon>Vertebrata</taxon>
        <taxon>Euteleostomi</taxon>
        <taxon>Mammalia</taxon>
        <taxon>Eutheria</taxon>
        <taxon>Euarchontoglires</taxon>
        <taxon>Glires</taxon>
        <taxon>Rodentia</taxon>
        <taxon>Myomorpha</taxon>
        <taxon>Muroidea</taxon>
        <taxon>Muridae</taxon>
        <taxon>Murinae</taxon>
        <taxon>Mus</taxon>
        <taxon>Mus</taxon>
    </lineage>
</organism>